<name>S31G1_MOUSE</name>
<keyword id="KW-1185">Reference proteome</keyword>
<protein>
    <recommendedName>
        <fullName>Spermatogenesis-associated protein 31G1</fullName>
    </recommendedName>
</protein>
<accession>Q3V0E1</accession>
<accession>A2AG32</accession>
<accession>Q9CVP8</accession>
<accession>Q9CVW7</accession>
<organism>
    <name type="scientific">Mus musculus</name>
    <name type="common">Mouse</name>
    <dbReference type="NCBI Taxonomy" id="10090"/>
    <lineage>
        <taxon>Eukaryota</taxon>
        <taxon>Metazoa</taxon>
        <taxon>Chordata</taxon>
        <taxon>Craniata</taxon>
        <taxon>Vertebrata</taxon>
        <taxon>Euteleostomi</taxon>
        <taxon>Mammalia</taxon>
        <taxon>Eutheria</taxon>
        <taxon>Euarchontoglires</taxon>
        <taxon>Glires</taxon>
        <taxon>Rodentia</taxon>
        <taxon>Myomorpha</taxon>
        <taxon>Muroidea</taxon>
        <taxon>Muridae</taxon>
        <taxon>Murinae</taxon>
        <taxon>Mus</taxon>
        <taxon>Mus</taxon>
    </lineage>
</organism>
<sequence length="1183" mass="130387">MGLLQGQLTHALACRHCSSITCLHSPGNLAILVLFMVWQIRRWWQLRGWQQLQPWCSGDKMTQGKGLQLLYHLAFFDCLWKQKSEEEEKEEKECLSLNPLKPYHLSKDTPIGNGFSTAPPHPSCRSEGRPRATETQEQVLIQSPSPSRSFPTFQTLTNLPVRSKRASGSSPQQTKLQLFSGLPSLYNESLKTIFLSSDGPSPLKLSICPSVFLNKVPFPPAYNLLLPCYHSSTYYPTPEAHILEDLEEIAPGSQLVQSPPSPPIPLVSSNLKPLLKGYKRIIPDTEVHTQWFTQNKEVPSVSENQGLYPQPELQKFRSSTFLYSSEVWRKRPGDLRLHQHNPELPFAFLLYPFNPQEVLDRFEMPWRNMKQNEHPKASETAMPTASPLPISLTECQRVNPTGDLSQVKTLCQTTVQKENLQIYELPISAPCQLTVPVTEGTGPPGTPPGYEAQWGILAYKGIPQASDPLMPASCHPSGSLSKVKNVNPKERLSAPKDVRENLGYREHPHVSKSPVSAPSPPLDTLSDYQRENPPEDGSGFKPQWECKETSGSPWASETPTLDFHVGFYEATPMCVPLGSEAQLKGTPSTENLCVYADIVSSPSLPSVSLPDFAIMGPQRILLESKALWETKEQKKHLWTSDSSCPHKTPLAPFIGPKRINTVDDVPRSEATGKNTDNTKKCSSSEPPFLNLNPSPALVQQPLRVSPIENPLKSKAWCGHIQRKNNFLASELPAQSLSQHLLEPSPEGVLSDVEPAGGFMKNKNHCVSASPVWECSPSPNSVLKFHISEPSGDQCNCTPKESVAEWTKDSWANELPGSSFFSALSQEPHSETELVCRNVLEREASQGPNPPAVNPPQPTAWPIQPGLSEAKAEAPSSQGEAVSEVSDHPVIHAWQWSRQLKLRLNKLQQSPTFKSPGSHHSFSSSPVLNLTLESWGPSSCSQQMHPLSLHPCSSSSHPPKVQRAEALPVQAPHCLHSSSQPQAQASGRAEQRSQKSKRLKRKAMVQIPSPGLGHVKADENCSGMGEPSDTGLLVSGKRQDKTLVLLSTQKRGSSRKSKAEKCGRTARLGSPTNTRENNPAQACRPAEASMPRFSRKFEHKAQSSPHSALAQQLLPNAAGPQDRPRTGLVAGETQNPCPFKCCPWIPTKQQLSSLSQEAPPTRGFQKLIDKFLGVHRPLPTKSSP</sequence>
<reference key="1">
    <citation type="journal article" date="2005" name="Science">
        <title>The transcriptional landscape of the mammalian genome.</title>
        <authorList>
            <person name="Carninci P."/>
            <person name="Kasukawa T."/>
            <person name="Katayama S."/>
            <person name="Gough J."/>
            <person name="Frith M.C."/>
            <person name="Maeda N."/>
            <person name="Oyama R."/>
            <person name="Ravasi T."/>
            <person name="Lenhard B."/>
            <person name="Wells C."/>
            <person name="Kodzius R."/>
            <person name="Shimokawa K."/>
            <person name="Bajic V.B."/>
            <person name="Brenner S.E."/>
            <person name="Batalov S."/>
            <person name="Forrest A.R."/>
            <person name="Zavolan M."/>
            <person name="Davis M.J."/>
            <person name="Wilming L.G."/>
            <person name="Aidinis V."/>
            <person name="Allen J.E."/>
            <person name="Ambesi-Impiombato A."/>
            <person name="Apweiler R."/>
            <person name="Aturaliya R.N."/>
            <person name="Bailey T.L."/>
            <person name="Bansal M."/>
            <person name="Baxter L."/>
            <person name="Beisel K.W."/>
            <person name="Bersano T."/>
            <person name="Bono H."/>
            <person name="Chalk A.M."/>
            <person name="Chiu K.P."/>
            <person name="Choudhary V."/>
            <person name="Christoffels A."/>
            <person name="Clutterbuck D.R."/>
            <person name="Crowe M.L."/>
            <person name="Dalla E."/>
            <person name="Dalrymple B.P."/>
            <person name="de Bono B."/>
            <person name="Della Gatta G."/>
            <person name="di Bernardo D."/>
            <person name="Down T."/>
            <person name="Engstrom P."/>
            <person name="Fagiolini M."/>
            <person name="Faulkner G."/>
            <person name="Fletcher C.F."/>
            <person name="Fukushima T."/>
            <person name="Furuno M."/>
            <person name="Futaki S."/>
            <person name="Gariboldi M."/>
            <person name="Georgii-Hemming P."/>
            <person name="Gingeras T.R."/>
            <person name="Gojobori T."/>
            <person name="Green R.E."/>
            <person name="Gustincich S."/>
            <person name="Harbers M."/>
            <person name="Hayashi Y."/>
            <person name="Hensch T.K."/>
            <person name="Hirokawa N."/>
            <person name="Hill D."/>
            <person name="Huminiecki L."/>
            <person name="Iacono M."/>
            <person name="Ikeo K."/>
            <person name="Iwama A."/>
            <person name="Ishikawa T."/>
            <person name="Jakt M."/>
            <person name="Kanapin A."/>
            <person name="Katoh M."/>
            <person name="Kawasawa Y."/>
            <person name="Kelso J."/>
            <person name="Kitamura H."/>
            <person name="Kitano H."/>
            <person name="Kollias G."/>
            <person name="Krishnan S.P."/>
            <person name="Kruger A."/>
            <person name="Kummerfeld S.K."/>
            <person name="Kurochkin I.V."/>
            <person name="Lareau L.F."/>
            <person name="Lazarevic D."/>
            <person name="Lipovich L."/>
            <person name="Liu J."/>
            <person name="Liuni S."/>
            <person name="McWilliam S."/>
            <person name="Madan Babu M."/>
            <person name="Madera M."/>
            <person name="Marchionni L."/>
            <person name="Matsuda H."/>
            <person name="Matsuzawa S."/>
            <person name="Miki H."/>
            <person name="Mignone F."/>
            <person name="Miyake S."/>
            <person name="Morris K."/>
            <person name="Mottagui-Tabar S."/>
            <person name="Mulder N."/>
            <person name="Nakano N."/>
            <person name="Nakauchi H."/>
            <person name="Ng P."/>
            <person name="Nilsson R."/>
            <person name="Nishiguchi S."/>
            <person name="Nishikawa S."/>
            <person name="Nori F."/>
            <person name="Ohara O."/>
            <person name="Okazaki Y."/>
            <person name="Orlando V."/>
            <person name="Pang K.C."/>
            <person name="Pavan W.J."/>
            <person name="Pavesi G."/>
            <person name="Pesole G."/>
            <person name="Petrovsky N."/>
            <person name="Piazza S."/>
            <person name="Reed J."/>
            <person name="Reid J.F."/>
            <person name="Ring B.Z."/>
            <person name="Ringwald M."/>
            <person name="Rost B."/>
            <person name="Ruan Y."/>
            <person name="Salzberg S.L."/>
            <person name="Sandelin A."/>
            <person name="Schneider C."/>
            <person name="Schoenbach C."/>
            <person name="Sekiguchi K."/>
            <person name="Semple C.A."/>
            <person name="Seno S."/>
            <person name="Sessa L."/>
            <person name="Sheng Y."/>
            <person name="Shibata Y."/>
            <person name="Shimada H."/>
            <person name="Shimada K."/>
            <person name="Silva D."/>
            <person name="Sinclair B."/>
            <person name="Sperling S."/>
            <person name="Stupka E."/>
            <person name="Sugiura K."/>
            <person name="Sultana R."/>
            <person name="Takenaka Y."/>
            <person name="Taki K."/>
            <person name="Tammoja K."/>
            <person name="Tan S.L."/>
            <person name="Tang S."/>
            <person name="Taylor M.S."/>
            <person name="Tegner J."/>
            <person name="Teichmann S.A."/>
            <person name="Ueda H.R."/>
            <person name="van Nimwegen E."/>
            <person name="Verardo R."/>
            <person name="Wei C.L."/>
            <person name="Yagi K."/>
            <person name="Yamanishi H."/>
            <person name="Zabarovsky E."/>
            <person name="Zhu S."/>
            <person name="Zimmer A."/>
            <person name="Hide W."/>
            <person name="Bult C."/>
            <person name="Grimmond S.M."/>
            <person name="Teasdale R.D."/>
            <person name="Liu E.T."/>
            <person name="Brusic V."/>
            <person name="Quackenbush J."/>
            <person name="Wahlestedt C."/>
            <person name="Mattick J.S."/>
            <person name="Hume D.A."/>
            <person name="Kai C."/>
            <person name="Sasaki D."/>
            <person name="Tomaru Y."/>
            <person name="Fukuda S."/>
            <person name="Kanamori-Katayama M."/>
            <person name="Suzuki M."/>
            <person name="Aoki J."/>
            <person name="Arakawa T."/>
            <person name="Iida J."/>
            <person name="Imamura K."/>
            <person name="Itoh M."/>
            <person name="Kato T."/>
            <person name="Kawaji H."/>
            <person name="Kawagashira N."/>
            <person name="Kawashima T."/>
            <person name="Kojima M."/>
            <person name="Kondo S."/>
            <person name="Konno H."/>
            <person name="Nakano K."/>
            <person name="Ninomiya N."/>
            <person name="Nishio T."/>
            <person name="Okada M."/>
            <person name="Plessy C."/>
            <person name="Shibata K."/>
            <person name="Shiraki T."/>
            <person name="Suzuki S."/>
            <person name="Tagami M."/>
            <person name="Waki K."/>
            <person name="Watahiki A."/>
            <person name="Okamura-Oho Y."/>
            <person name="Suzuki H."/>
            <person name="Kawai J."/>
            <person name="Hayashizaki Y."/>
        </authorList>
    </citation>
    <scope>NUCLEOTIDE SEQUENCE [LARGE SCALE MRNA]</scope>
    <source>
        <strain>C57BL/6J</strain>
        <tissue>Testis</tissue>
    </source>
</reference>
<reference key="2">
    <citation type="journal article" date="2009" name="PLoS Biol.">
        <title>Lineage-specific biology revealed by a finished genome assembly of the mouse.</title>
        <authorList>
            <person name="Church D.M."/>
            <person name="Goodstadt L."/>
            <person name="Hillier L.W."/>
            <person name="Zody M.C."/>
            <person name="Goldstein S."/>
            <person name="She X."/>
            <person name="Bult C.J."/>
            <person name="Agarwala R."/>
            <person name="Cherry J.L."/>
            <person name="DiCuccio M."/>
            <person name="Hlavina W."/>
            <person name="Kapustin Y."/>
            <person name="Meric P."/>
            <person name="Maglott D."/>
            <person name="Birtle Z."/>
            <person name="Marques A.C."/>
            <person name="Graves T."/>
            <person name="Zhou S."/>
            <person name="Teague B."/>
            <person name="Potamousis K."/>
            <person name="Churas C."/>
            <person name="Place M."/>
            <person name="Herschleb J."/>
            <person name="Runnheim R."/>
            <person name="Forrest D."/>
            <person name="Amos-Landgraf J."/>
            <person name="Schwartz D.C."/>
            <person name="Cheng Z."/>
            <person name="Lindblad-Toh K."/>
            <person name="Eichler E.E."/>
            <person name="Ponting C.P."/>
        </authorList>
    </citation>
    <scope>NUCLEOTIDE SEQUENCE [LARGE SCALE GENOMIC DNA]</scope>
    <source>
        <strain>C57BL/6J</strain>
    </source>
</reference>
<reference key="3">
    <citation type="journal article" date="2023" name="Dev. Biol.">
        <title>C9orf131 and C10orf120 are not essential for male fertility in humans or mice.</title>
        <authorList>
            <person name="He J."/>
            <person name="Su L."/>
            <person name="Wang W."/>
            <person name="Li Y."/>
            <person name="Meng L."/>
            <person name="Tan C."/>
            <person name="Lin G."/>
            <person name="Tan Y.Q."/>
            <person name="Zhang Q."/>
            <person name="Tu C."/>
        </authorList>
    </citation>
    <scope>FUNCTION</scope>
    <scope>TISSUE SPECIFICITY</scope>
    <scope>DISRUPTION PHENOTYPE</scope>
</reference>
<feature type="chain" id="PRO_0000294444" description="Spermatogenesis-associated protein 31G1">
    <location>
        <begin position="1"/>
        <end position="1183"/>
    </location>
</feature>
<feature type="region of interest" description="Disordered" evidence="1">
    <location>
        <begin position="109"/>
        <end position="153"/>
    </location>
</feature>
<feature type="region of interest" description="Disordered" evidence="1">
    <location>
        <begin position="469"/>
        <end position="555"/>
    </location>
</feature>
<feature type="region of interest" description="Disordered" evidence="1">
    <location>
        <begin position="661"/>
        <end position="686"/>
    </location>
</feature>
<feature type="region of interest" description="Disordered" evidence="1">
    <location>
        <begin position="843"/>
        <end position="884"/>
    </location>
</feature>
<feature type="region of interest" description="Disordered" evidence="1">
    <location>
        <begin position="973"/>
        <end position="1032"/>
    </location>
</feature>
<feature type="region of interest" description="Disordered" evidence="1">
    <location>
        <begin position="1048"/>
        <end position="1087"/>
    </location>
</feature>
<feature type="compositionally biased region" description="Basic and acidic residues" evidence="1">
    <location>
        <begin position="124"/>
        <end position="134"/>
    </location>
</feature>
<feature type="compositionally biased region" description="Polar residues" evidence="1">
    <location>
        <begin position="135"/>
        <end position="153"/>
    </location>
</feature>
<feature type="compositionally biased region" description="Basic and acidic residues" evidence="1">
    <location>
        <begin position="487"/>
        <end position="509"/>
    </location>
</feature>
<feature type="compositionally biased region" description="Polar residues" evidence="1">
    <location>
        <begin position="671"/>
        <end position="685"/>
    </location>
</feature>
<feature type="compositionally biased region" description="Pro residues" evidence="1">
    <location>
        <begin position="847"/>
        <end position="858"/>
    </location>
</feature>
<feature type="compositionally biased region" description="Polar residues" evidence="1">
    <location>
        <begin position="975"/>
        <end position="984"/>
    </location>
</feature>
<feature type="compositionally biased region" description="Basic residues" evidence="1">
    <location>
        <begin position="993"/>
        <end position="1002"/>
    </location>
</feature>
<feature type="compositionally biased region" description="Polar residues" evidence="1">
    <location>
        <begin position="1069"/>
        <end position="1079"/>
    </location>
</feature>
<feature type="sequence conflict" description="In Ref. 1; BAB24476." evidence="3" ref="1">
    <original>S</original>
    <variation>F</variation>
    <location>
        <position position="126"/>
    </location>
</feature>
<proteinExistence type="evidence at transcript level"/>
<comment type="function">
    <text evidence="2">Dispensable for normal development and fertility.</text>
</comment>
<comment type="tissue specificity">
    <text evidence="2">Expressed in kidney and testis (PubMed:36871790). Expressed at lower levels in stomach, intestine, epididymis and ovary (PubMed:36871790). Expressed at very low levels in heart and spleen (PubMed:36871790).</text>
</comment>
<comment type="disruption phenotype">
    <text evidence="2">No visible phenotype (PubMed:36871790). No effect on testis size, testis-to-body weight ratio, germ cell development or spermiogenesis (PubMed:36871790). No effect on sperm morphology, count or motility (PubMed:36871790). No effect on levels of germ cell apoptosis, chromosome H1t histone association or acrosome biogenesis (PubMed:36871790).</text>
</comment>
<gene>
    <name type="primary">Spata31g1</name>
</gene>
<dbReference type="EMBL" id="AK006242">
    <property type="protein sequence ID" value="BAB24476.1"/>
    <property type="molecule type" value="mRNA"/>
</dbReference>
<dbReference type="EMBL" id="AK007056">
    <property type="protein sequence ID" value="BAB24843.3"/>
    <property type="molecule type" value="mRNA"/>
</dbReference>
<dbReference type="EMBL" id="AK133216">
    <property type="protein sequence ID" value="BAE21563.1"/>
    <property type="molecule type" value="mRNA"/>
</dbReference>
<dbReference type="EMBL" id="AL672276">
    <property type="status" value="NOT_ANNOTATED_CDS"/>
    <property type="molecule type" value="Genomic_DNA"/>
</dbReference>
<dbReference type="CCDS" id="CCDS51160.1"/>
<dbReference type="RefSeq" id="NP_080364.1">
    <property type="nucleotide sequence ID" value="NM_026088.3"/>
</dbReference>
<dbReference type="FunCoup" id="Q3V0E1">
    <property type="interactions" value="1"/>
</dbReference>
<dbReference type="STRING" id="10090.ENSMUSP00000030163"/>
<dbReference type="GlyGen" id="Q3V0E1">
    <property type="glycosylation" value="2 sites"/>
</dbReference>
<dbReference type="iPTMnet" id="Q3V0E1"/>
<dbReference type="PhosphoSitePlus" id="Q3V0E1"/>
<dbReference type="PaxDb" id="10090-ENSMUSP00000030163"/>
<dbReference type="Antibodypedia" id="50361">
    <property type="antibodies" value="58 antibodies from 3 providers"/>
</dbReference>
<dbReference type="Ensembl" id="ENSMUST00000030163.12">
    <property type="protein sequence ID" value="ENSMUSP00000030163.6"/>
    <property type="gene ID" value="ENSMUSG00000028451.13"/>
</dbReference>
<dbReference type="GeneID" id="67317"/>
<dbReference type="KEGG" id="mmu:67317"/>
<dbReference type="UCSC" id="uc008soq.2">
    <property type="organism name" value="mouse"/>
</dbReference>
<dbReference type="AGR" id="MGI:1914567"/>
<dbReference type="CTD" id="138724"/>
<dbReference type="MGI" id="MGI:1914567">
    <property type="gene designation" value="Spata31g1"/>
</dbReference>
<dbReference type="VEuPathDB" id="HostDB:ENSMUSG00000028451"/>
<dbReference type="eggNOG" id="ENOG502RJ23">
    <property type="taxonomic scope" value="Eukaryota"/>
</dbReference>
<dbReference type="GeneTree" id="ENSGT00390000000748"/>
<dbReference type="HOGENOM" id="CLU_010861_0_0_1"/>
<dbReference type="InParanoid" id="Q3V0E1"/>
<dbReference type="OMA" id="WHWSREL"/>
<dbReference type="OrthoDB" id="9451032at2759"/>
<dbReference type="PhylomeDB" id="Q3V0E1"/>
<dbReference type="TreeFam" id="TF337467"/>
<dbReference type="BioGRID-ORCS" id="67317">
    <property type="hits" value="2 hits in 76 CRISPR screens"/>
</dbReference>
<dbReference type="PRO" id="PR:Q3V0E1"/>
<dbReference type="Proteomes" id="UP000000589">
    <property type="component" value="Chromosome 4"/>
</dbReference>
<dbReference type="RNAct" id="Q3V0E1">
    <property type="molecule type" value="protein"/>
</dbReference>
<dbReference type="Bgee" id="ENSMUSG00000028451">
    <property type="expression patterns" value="Expressed in spermatid and 38 other cell types or tissues"/>
</dbReference>
<dbReference type="ExpressionAtlas" id="Q3V0E1">
    <property type="expression patterns" value="baseline and differential"/>
</dbReference>
<dbReference type="InterPro" id="IPR026677">
    <property type="entry name" value="Spata31g1-like"/>
</dbReference>
<dbReference type="PANTHER" id="PTHR21777">
    <property type="entry name" value="RCG55159-LIKE"/>
    <property type="match status" value="1"/>
</dbReference>
<dbReference type="PANTHER" id="PTHR21777:SF0">
    <property type="entry name" value="RCG55159-LIKE"/>
    <property type="match status" value="1"/>
</dbReference>
<evidence type="ECO:0000256" key="1">
    <source>
        <dbReference type="SAM" id="MobiDB-lite"/>
    </source>
</evidence>
<evidence type="ECO:0000269" key="2">
    <source>
    </source>
</evidence>
<evidence type="ECO:0000305" key="3"/>